<comment type="function">
    <text evidence="5">ABC-type transporter; part of the gene cluster that mediates the biosynthesis of the sesterterpenes ophiobolins, fungal phytotoxins with potential anti-cancer activities (PubMed:27116000). Acts as a specific transporter involved in ophiobolins secretion (PubMed:27116000).</text>
</comment>
<comment type="subcellular location">
    <subcellularLocation>
        <location evidence="8">Cell membrane</location>
        <topology evidence="1">Multi-pass membrane protein</topology>
    </subcellularLocation>
</comment>
<comment type="similarity">
    <text evidence="7">Belongs to the ABC transporter superfamily. ABCG family. PDR (TC 3.A.1.205) subfamily.</text>
</comment>
<keyword id="KW-0067">ATP-binding</keyword>
<keyword id="KW-1003">Cell membrane</keyword>
<keyword id="KW-0325">Glycoprotein</keyword>
<keyword id="KW-0472">Membrane</keyword>
<keyword id="KW-0547">Nucleotide-binding</keyword>
<keyword id="KW-1185">Reference proteome</keyword>
<keyword id="KW-0812">Transmembrane</keyword>
<keyword id="KW-1133">Transmembrane helix</keyword>
<keyword id="KW-0813">Transport</keyword>
<organism>
    <name type="scientific">Cochliobolus heterostrophus (strain C5 / ATCC 48332 / race O)</name>
    <name type="common">Southern corn leaf blight fungus</name>
    <name type="synonym">Bipolaris maydis</name>
    <dbReference type="NCBI Taxonomy" id="701091"/>
    <lineage>
        <taxon>Eukaryota</taxon>
        <taxon>Fungi</taxon>
        <taxon>Dikarya</taxon>
        <taxon>Ascomycota</taxon>
        <taxon>Pezizomycotina</taxon>
        <taxon>Dothideomycetes</taxon>
        <taxon>Pleosporomycetidae</taxon>
        <taxon>Pleosporales</taxon>
        <taxon>Pleosporineae</taxon>
        <taxon>Pleosporaceae</taxon>
        <taxon>Bipolaris</taxon>
    </lineage>
</organism>
<dbReference type="EMBL" id="KB445570">
    <property type="protein sequence ID" value="EMD96239.1"/>
    <property type="molecule type" value="Genomic_DNA"/>
</dbReference>
<dbReference type="SMR" id="M2UCE5"/>
<dbReference type="STRING" id="701091.M2UCE5"/>
<dbReference type="GlyCosmos" id="M2UCE5">
    <property type="glycosylation" value="6 sites, No reported glycans"/>
</dbReference>
<dbReference type="eggNOG" id="KOG0065">
    <property type="taxonomic scope" value="Eukaryota"/>
</dbReference>
<dbReference type="HOGENOM" id="CLU_000604_35_0_1"/>
<dbReference type="OMA" id="AMTDNAP"/>
<dbReference type="OrthoDB" id="11631at28556"/>
<dbReference type="Proteomes" id="UP000016936">
    <property type="component" value="Unassembled WGS sequence"/>
</dbReference>
<dbReference type="GO" id="GO:0005886">
    <property type="term" value="C:plasma membrane"/>
    <property type="evidence" value="ECO:0007669"/>
    <property type="project" value="UniProtKB-SubCell"/>
</dbReference>
<dbReference type="GO" id="GO:0140359">
    <property type="term" value="F:ABC-type transporter activity"/>
    <property type="evidence" value="ECO:0007669"/>
    <property type="project" value="InterPro"/>
</dbReference>
<dbReference type="GO" id="GO:0005524">
    <property type="term" value="F:ATP binding"/>
    <property type="evidence" value="ECO:0007669"/>
    <property type="project" value="UniProtKB-KW"/>
</dbReference>
<dbReference type="GO" id="GO:0016887">
    <property type="term" value="F:ATP hydrolysis activity"/>
    <property type="evidence" value="ECO:0007669"/>
    <property type="project" value="InterPro"/>
</dbReference>
<dbReference type="CDD" id="cd03233">
    <property type="entry name" value="ABCG_PDR_domain1"/>
    <property type="match status" value="1"/>
</dbReference>
<dbReference type="CDD" id="cd03232">
    <property type="entry name" value="ABCG_PDR_domain2"/>
    <property type="match status" value="1"/>
</dbReference>
<dbReference type="FunFam" id="3.40.50.300:FF:000881">
    <property type="entry name" value="ABC multidrug transporter A-1"/>
    <property type="match status" value="1"/>
</dbReference>
<dbReference type="FunFam" id="3.40.50.300:FF:000054">
    <property type="entry name" value="ABC multidrug transporter atrF"/>
    <property type="match status" value="1"/>
</dbReference>
<dbReference type="Gene3D" id="3.40.50.300">
    <property type="entry name" value="P-loop containing nucleotide triphosphate hydrolases"/>
    <property type="match status" value="2"/>
</dbReference>
<dbReference type="InterPro" id="IPR003593">
    <property type="entry name" value="AAA+_ATPase"/>
</dbReference>
<dbReference type="InterPro" id="IPR013525">
    <property type="entry name" value="ABC2_TM"/>
</dbReference>
<dbReference type="InterPro" id="IPR029481">
    <property type="entry name" value="ABC_trans_N"/>
</dbReference>
<dbReference type="InterPro" id="IPR003439">
    <property type="entry name" value="ABC_transporter-like_ATP-bd"/>
</dbReference>
<dbReference type="InterPro" id="IPR043926">
    <property type="entry name" value="ABCG_dom"/>
</dbReference>
<dbReference type="InterPro" id="IPR034001">
    <property type="entry name" value="ABCG_PDR_1"/>
</dbReference>
<dbReference type="InterPro" id="IPR034003">
    <property type="entry name" value="ABCG_PDR_2"/>
</dbReference>
<dbReference type="InterPro" id="IPR027417">
    <property type="entry name" value="P-loop_NTPase"/>
</dbReference>
<dbReference type="InterPro" id="IPR010929">
    <property type="entry name" value="PDR_CDR_ABC"/>
</dbReference>
<dbReference type="PANTHER" id="PTHR19241">
    <property type="entry name" value="ATP-BINDING CASSETTE TRANSPORTER"/>
    <property type="match status" value="1"/>
</dbReference>
<dbReference type="Pfam" id="PF01061">
    <property type="entry name" value="ABC2_membrane"/>
    <property type="match status" value="2"/>
</dbReference>
<dbReference type="Pfam" id="PF19055">
    <property type="entry name" value="ABC2_membrane_7"/>
    <property type="match status" value="1"/>
</dbReference>
<dbReference type="Pfam" id="PF00005">
    <property type="entry name" value="ABC_tran"/>
    <property type="match status" value="2"/>
</dbReference>
<dbReference type="Pfam" id="PF14510">
    <property type="entry name" value="ABC_trans_N"/>
    <property type="match status" value="1"/>
</dbReference>
<dbReference type="Pfam" id="PF06422">
    <property type="entry name" value="PDR_CDR"/>
    <property type="match status" value="1"/>
</dbReference>
<dbReference type="SMART" id="SM00382">
    <property type="entry name" value="AAA"/>
    <property type="match status" value="2"/>
</dbReference>
<dbReference type="SUPFAM" id="SSF52540">
    <property type="entry name" value="P-loop containing nucleoside triphosphate hydrolases"/>
    <property type="match status" value="2"/>
</dbReference>
<dbReference type="PROSITE" id="PS50893">
    <property type="entry name" value="ABC_TRANSPORTER_2"/>
    <property type="match status" value="2"/>
</dbReference>
<gene>
    <name evidence="6" type="primary">oblD</name>
    <name type="ORF">COCHEDRAFT_98522</name>
</gene>
<reference key="1">
    <citation type="journal article" date="2012" name="PLoS Pathog.">
        <title>Diverse lifestyles and strategies of plant pathogenesis encoded in the genomes of eighteen Dothideomycetes fungi.</title>
        <authorList>
            <person name="Ohm R.A."/>
            <person name="Feau N."/>
            <person name="Henrissat B."/>
            <person name="Schoch C.L."/>
            <person name="Horwitz B.A."/>
            <person name="Barry K.W."/>
            <person name="Condon B.J."/>
            <person name="Copeland A.C."/>
            <person name="Dhillon B."/>
            <person name="Glaser F."/>
            <person name="Hesse C.N."/>
            <person name="Kosti I."/>
            <person name="LaButti K."/>
            <person name="Lindquist E.A."/>
            <person name="Lucas S."/>
            <person name="Salamov A.A."/>
            <person name="Bradshaw R.E."/>
            <person name="Ciuffetti L."/>
            <person name="Hamelin R.C."/>
            <person name="Kema G.H.J."/>
            <person name="Lawrence C."/>
            <person name="Scott J.A."/>
            <person name="Spatafora J.W."/>
            <person name="Turgeon B.G."/>
            <person name="de Wit P.J.G.M."/>
            <person name="Zhong S."/>
            <person name="Goodwin S.B."/>
            <person name="Grigoriev I.V."/>
        </authorList>
    </citation>
    <scope>NUCLEOTIDE SEQUENCE [LARGE SCALE GENOMIC DNA]</scope>
    <source>
        <strain>C5 / ATCC 48332 / race O</strain>
    </source>
</reference>
<reference key="2">
    <citation type="journal article" date="2013" name="PLoS Genet.">
        <title>Comparative genome structure, secondary metabolite, and effector coding capacity across Cochliobolus pathogens.</title>
        <authorList>
            <person name="Condon B.J."/>
            <person name="Leng Y."/>
            <person name="Wu D."/>
            <person name="Bushley K.E."/>
            <person name="Ohm R.A."/>
            <person name="Otillar R."/>
            <person name="Martin J."/>
            <person name="Schackwitz W."/>
            <person name="Grimwood J."/>
            <person name="MohdZainudin N."/>
            <person name="Xue C."/>
            <person name="Wang R."/>
            <person name="Manning V.A."/>
            <person name="Dhillon B."/>
            <person name="Tu Z.J."/>
            <person name="Steffenson B.J."/>
            <person name="Salamov A."/>
            <person name="Sun H."/>
            <person name="Lowry S."/>
            <person name="LaButti K."/>
            <person name="Han J."/>
            <person name="Copeland A."/>
            <person name="Lindquist E."/>
            <person name="Barry K."/>
            <person name="Schmutz J."/>
            <person name="Baker S.E."/>
            <person name="Ciuffetti L.M."/>
            <person name="Grigoriev I.V."/>
            <person name="Zhong S."/>
            <person name="Turgeon B.G."/>
        </authorList>
    </citation>
    <scope>NUCLEOTIDE SEQUENCE [LARGE SCALE GENOMIC DNA]</scope>
    <source>
        <strain>C5 / ATCC 48332 / race O</strain>
    </source>
</reference>
<reference key="3">
    <citation type="journal article" date="2016" name="Org. Lett.">
        <title>Multiple oxidative modifications in the ophiobolin biosynthesis: P450 oxidations found in genome mining.</title>
        <authorList>
            <person name="Narita K."/>
            <person name="Chiba R."/>
            <person name="Minami A."/>
            <person name="Kodama M."/>
            <person name="Fujii I."/>
            <person name="Gomi K."/>
            <person name="Oikawa H."/>
        </authorList>
    </citation>
    <scope>FUNCTION</scope>
</reference>
<accession>M2UCE5</accession>
<proteinExistence type="inferred from homology"/>
<name>OBLD_COCH5</name>
<feature type="chain" id="PRO_0000451174" description="ABC-type transporter oblD">
    <location>
        <begin position="1"/>
        <end position="1508"/>
    </location>
</feature>
<feature type="transmembrane region" description="Helical" evidence="1">
    <location>
        <begin position="501"/>
        <end position="521"/>
    </location>
</feature>
<feature type="transmembrane region" description="Helical" evidence="1">
    <location>
        <begin position="536"/>
        <end position="556"/>
    </location>
</feature>
<feature type="transmembrane region" description="Helical" evidence="1">
    <location>
        <begin position="610"/>
        <end position="630"/>
    </location>
</feature>
<feature type="transmembrane region" description="Helical" evidence="1">
    <location>
        <begin position="643"/>
        <end position="663"/>
    </location>
</feature>
<feature type="transmembrane region" description="Helical" evidence="1">
    <location>
        <begin position="752"/>
        <end position="772"/>
    </location>
</feature>
<feature type="transmembrane region" description="Helical" evidence="1">
    <location>
        <begin position="1172"/>
        <end position="1192"/>
    </location>
</feature>
<feature type="transmembrane region" description="Helical" evidence="1">
    <location>
        <begin position="1206"/>
        <end position="1226"/>
    </location>
</feature>
<feature type="transmembrane region" description="Helical" evidence="1">
    <location>
        <begin position="1296"/>
        <end position="1316"/>
    </location>
</feature>
<feature type="transmembrane region" description="Helical" evidence="1">
    <location>
        <begin position="1322"/>
        <end position="1342"/>
    </location>
</feature>
<feature type="transmembrane region" description="Helical" evidence="1">
    <location>
        <begin position="1443"/>
        <end position="1463"/>
    </location>
</feature>
<feature type="domain" description="ABC transporter 1" evidence="2">
    <location>
        <begin position="136"/>
        <end position="390"/>
    </location>
</feature>
<feature type="domain" description="ABC transporter 2" evidence="2">
    <location>
        <begin position="828"/>
        <end position="1070"/>
    </location>
</feature>
<feature type="region of interest" description="Disordered" evidence="4">
    <location>
        <begin position="1"/>
        <end position="35"/>
    </location>
</feature>
<feature type="region of interest" description="Disordered" evidence="4">
    <location>
        <begin position="54"/>
        <end position="82"/>
    </location>
</feature>
<feature type="compositionally biased region" description="Polar residues" evidence="4">
    <location>
        <begin position="11"/>
        <end position="24"/>
    </location>
</feature>
<feature type="compositionally biased region" description="Polar residues" evidence="4">
    <location>
        <begin position="55"/>
        <end position="68"/>
    </location>
</feature>
<feature type="binding site" evidence="2">
    <location>
        <begin position="864"/>
        <end position="871"/>
    </location>
    <ligand>
        <name>ATP</name>
        <dbReference type="ChEBI" id="CHEBI:30616"/>
    </ligand>
</feature>
<feature type="glycosylation site" description="N-linked (GlcNAc...) asparagine" evidence="3">
    <location>
        <position position="24"/>
    </location>
</feature>
<feature type="glycosylation site" description="N-linked (GlcNAc...) asparagine" evidence="3">
    <location>
        <position position="35"/>
    </location>
</feature>
<feature type="glycosylation site" description="N-linked (GlcNAc...) asparagine" evidence="3">
    <location>
        <position position="83"/>
    </location>
</feature>
<feature type="glycosylation site" description="N-linked (GlcNAc...) asparagine" evidence="3">
    <location>
        <position position="231"/>
    </location>
</feature>
<feature type="glycosylation site" description="N-linked (GlcNAc...) asparagine" evidence="3">
    <location>
        <position position="314"/>
    </location>
</feature>
<feature type="glycosylation site" description="N-linked (GlcNAc...) asparagine" evidence="3">
    <location>
        <position position="1390"/>
    </location>
</feature>
<evidence type="ECO:0000255" key="1"/>
<evidence type="ECO:0000255" key="2">
    <source>
        <dbReference type="PROSITE-ProRule" id="PRU00434"/>
    </source>
</evidence>
<evidence type="ECO:0000255" key="3">
    <source>
        <dbReference type="PROSITE-ProRule" id="PRU00498"/>
    </source>
</evidence>
<evidence type="ECO:0000256" key="4">
    <source>
        <dbReference type="SAM" id="MobiDB-lite"/>
    </source>
</evidence>
<evidence type="ECO:0000269" key="5">
    <source>
    </source>
</evidence>
<evidence type="ECO:0000303" key="6">
    <source>
    </source>
</evidence>
<evidence type="ECO:0000305" key="7"/>
<evidence type="ECO:0000305" key="8">
    <source>
    </source>
</evidence>
<protein>
    <recommendedName>
        <fullName evidence="6">ABC-type transporter oblD</fullName>
    </recommendedName>
    <alternativeName>
        <fullName evidence="6">Ophiobolin biosynthesis cluster protein D</fullName>
    </alternativeName>
</protein>
<sequence>MSLGPGGFEATPNSVMPSDASLHNQSHHTDSLTNNDSIASTEQREKEVHQLARKYTQNSVYSTTSQNPFAAEPGSKLDPNGGNFSARAWAKAMLQTHTDDNQAHPLRTLGVSFSNLNVYGFGFDTDYQKSVGNIWLEAVGLVRKLMGQRERKIEILRDLEGLVEAGEMLVVLGPPGAGCSTFLKTLTGQTHGFYVDDKSNLNYQGVTPKQLIKNFRGEAIYTAEVDVHFPNITVGDTLFFAARARAPRHIPGGATIDQYAEHMRDVIMASFGISHTKNTIVGNDFIRGVSGGERKRVSISEACLSQAPLQCWDNSTRGLDSANAIEFCKTLRMQTEINGATACVAIYQAPQAAYDYFDKVLVLYKGRQIYFGPTAQAKQYFLNMGFVCPDRQTDADFLTSMTSHLERVVQPGYENQVPRTPDEFAARWKASRERAELLNQIEMYNSKYATGGEHLERFKESRRAQQAKAQRVSSPYTLSYTQQIKLCLWRSWVRLKGDPSITISSAMGNAIIALIISSMFFNLKDDTSSFFQRGSLLFFAIVINAFSSGLEMLTLYAQRPIVEKHSRFALYHPSAEAIASMLMDLPYKTLNAISSNLILYFMTNLRREPGNFFFFVFTSFVLTLTMSMFFRSIASLTRSLVEALPFAAILITGLTMYTGFTIPTSYMPGWSRWMAYIDPIAYGFESIMVNEFSGREFLCVNYVPAGPSYNVGGNNRVCSTVGSVPGQPFVLGDDYIRSTYGYEASRKWRNVGIIFAFMVILCAIYLVASDFITEKKSKGEILVFRRGHKNLDRSTGQDDVEGGSERTTTAANTKSDDIAIIEQQTAIFQWKDICYDIQIQKERRRILDHVDGWVKPGTLTALMGVSGAGKTTLLDVLASRTTMGVISGEMLVDGKERDDSFQRKTGYAQQQDLHLSTATVREALTFSALLRQPAHIPREEKIAYVTEVIKLLEMTEFADAVVGIPGEGLNVEQRKRLTIGVELAARPALLLFLDEPTSGLDSQTSWAILDLLDKLKKNGQAILCTIHQPSAMLFQRFDRLLFLKSGGQTVYYGDVGENSKILIDYFTRNGGPPCPPAANPAEWMLEVIGAAPGSHTDIDWHDTWRKSPEYAYVQAHLAELKEERSRMTDLSRTASRQAHDAASFREFAAPFWAQFYEVQLRVFQQLWRTPTYIYSKAFLCVSTSLYVGFSLYNTPNTLQGLQNQMFAIFTLFFLFGQFIQQIMPHFVAQRALYEARERPSKTYSWKAFIMSNIIVELPWNTLMSVLLFLCWYYPIGLSHNAEATDSTALRGAQMWLFVWVFLMFASTFAHFMIAALDTAENAGNMGNLLFTLCVIFCGILTTPEQMPRFWIFMYRVSPFTYLVGGMMAVGVADSSVTCAANEYLHFDPVNGTCGEYMAQYQAMAGGYVQNPSATSNCAFCPMGDTNVFLKTVHAEYSNVWRNFGLMWVFVVFNAFAACGLYYWARVPKRPTIEKEAAPIRAEGSLDSETVVGRTSAVEQQDAEKRAAF</sequence>